<evidence type="ECO:0000255" key="1">
    <source>
        <dbReference type="HAMAP-Rule" id="MF_00391"/>
    </source>
</evidence>
<evidence type="ECO:0000256" key="2">
    <source>
        <dbReference type="SAM" id="MobiDB-lite"/>
    </source>
</evidence>
<evidence type="ECO:0000305" key="3"/>
<accession>Q6B951</accession>
<protein>
    <recommendedName>
        <fullName evidence="1">Large ribosomal subunit protein bL34c</fullName>
    </recommendedName>
    <alternativeName>
        <fullName evidence="3">50S ribosomal protein L34, chloroplastic</fullName>
    </alternativeName>
</protein>
<reference key="1">
    <citation type="journal article" date="2004" name="J. Mol. Evol.">
        <title>Comparative analysis of the complete plastid genome sequence of the red alga Gracilaria tenuistipitata var. liui provides insights into the evolution of rhodoplasts and their relationship to other plastids.</title>
        <authorList>
            <person name="Hagopian J.C."/>
            <person name="Reis M."/>
            <person name="Kitajima J.P."/>
            <person name="Bhattacharya D."/>
            <person name="de Oliveira M.C."/>
        </authorList>
    </citation>
    <scope>NUCLEOTIDE SEQUENCE [LARGE SCALE GENOMIC DNA]</scope>
</reference>
<proteinExistence type="inferred from homology"/>
<dbReference type="EMBL" id="AY673996">
    <property type="protein sequence ID" value="AAT79584.1"/>
    <property type="molecule type" value="Genomic_DNA"/>
</dbReference>
<dbReference type="RefSeq" id="YP_063509.1">
    <property type="nucleotide sequence ID" value="NC_006137.1"/>
</dbReference>
<dbReference type="SMR" id="Q6B951"/>
<dbReference type="GeneID" id="2944108"/>
<dbReference type="GO" id="GO:0009507">
    <property type="term" value="C:chloroplast"/>
    <property type="evidence" value="ECO:0007669"/>
    <property type="project" value="UniProtKB-SubCell"/>
</dbReference>
<dbReference type="GO" id="GO:1990904">
    <property type="term" value="C:ribonucleoprotein complex"/>
    <property type="evidence" value="ECO:0007669"/>
    <property type="project" value="UniProtKB-KW"/>
</dbReference>
<dbReference type="GO" id="GO:0005840">
    <property type="term" value="C:ribosome"/>
    <property type="evidence" value="ECO:0007669"/>
    <property type="project" value="UniProtKB-KW"/>
</dbReference>
<dbReference type="GO" id="GO:0003735">
    <property type="term" value="F:structural constituent of ribosome"/>
    <property type="evidence" value="ECO:0007669"/>
    <property type="project" value="InterPro"/>
</dbReference>
<dbReference type="GO" id="GO:0006412">
    <property type="term" value="P:translation"/>
    <property type="evidence" value="ECO:0007669"/>
    <property type="project" value="UniProtKB-UniRule"/>
</dbReference>
<dbReference type="Gene3D" id="1.10.287.3980">
    <property type="match status" value="1"/>
</dbReference>
<dbReference type="HAMAP" id="MF_00391">
    <property type="entry name" value="Ribosomal_bL34"/>
    <property type="match status" value="1"/>
</dbReference>
<dbReference type="InterPro" id="IPR000271">
    <property type="entry name" value="Ribosomal_bL34"/>
</dbReference>
<dbReference type="NCBIfam" id="TIGR01030">
    <property type="entry name" value="rpmH_bact"/>
    <property type="match status" value="1"/>
</dbReference>
<dbReference type="Pfam" id="PF00468">
    <property type="entry name" value="Ribosomal_L34"/>
    <property type="match status" value="1"/>
</dbReference>
<organism>
    <name type="scientific">Gracilaria tenuistipitata var. liui</name>
    <name type="common">Red alga</name>
    <dbReference type="NCBI Taxonomy" id="285951"/>
    <lineage>
        <taxon>Eukaryota</taxon>
        <taxon>Rhodophyta</taxon>
        <taxon>Florideophyceae</taxon>
        <taxon>Rhodymeniophycidae</taxon>
        <taxon>Gracilariales</taxon>
        <taxon>Gracilariaceae</taxon>
        <taxon>Gracilaria</taxon>
        <taxon>Gracilaria tenuistipitata</taxon>
    </lineage>
</organism>
<name>RK34_GRATL</name>
<gene>
    <name evidence="1" type="primary">rpl34</name>
    <name type="ordered locus">Grc000002</name>
</gene>
<keyword id="KW-0150">Chloroplast</keyword>
<keyword id="KW-0934">Plastid</keyword>
<keyword id="KW-0687">Ribonucleoprotein</keyword>
<keyword id="KW-0689">Ribosomal protein</keyword>
<feature type="chain" id="PRO_0000187515" description="Large ribosomal subunit protein bL34c">
    <location>
        <begin position="1"/>
        <end position="45"/>
    </location>
</feature>
<feature type="region of interest" description="Disordered" evidence="2">
    <location>
        <begin position="1"/>
        <end position="45"/>
    </location>
</feature>
<feature type="compositionally biased region" description="Polar residues" evidence="2">
    <location>
        <begin position="1"/>
        <end position="10"/>
    </location>
</feature>
<feature type="compositionally biased region" description="Basic residues" evidence="2">
    <location>
        <begin position="32"/>
        <end position="45"/>
    </location>
</feature>
<sequence length="45" mass="5208">MSKGFSNGTNIKRVRKSGFRARMSNSSGRKILNSRRRKQRKKIAL</sequence>
<geneLocation type="chloroplast"/>
<comment type="subcellular location">
    <subcellularLocation>
        <location>Plastid</location>
        <location>Chloroplast</location>
    </subcellularLocation>
</comment>
<comment type="similarity">
    <text evidence="1">Belongs to the bacterial ribosomal protein bL34 family.</text>
</comment>